<accession>Q8CI43</accession>
<feature type="chain" id="PRO_0000248833" description="Myosin light chain 6B">
    <location>
        <begin position="1"/>
        <end position="207"/>
    </location>
</feature>
<feature type="domain" description="EF-hand 1" evidence="1">
    <location>
        <begin position="63"/>
        <end position="98"/>
    </location>
</feature>
<feature type="domain" description="EF-hand 2" evidence="1">
    <location>
        <begin position="140"/>
        <end position="175"/>
    </location>
</feature>
<feature type="domain" description="EF-hand 3" evidence="1">
    <location>
        <begin position="175"/>
        <end position="207"/>
    </location>
</feature>
<feature type="region of interest" description="Disordered" evidence="2">
    <location>
        <begin position="1"/>
        <end position="50"/>
    </location>
</feature>
<feature type="compositionally biased region" description="Low complexity" evidence="2">
    <location>
        <begin position="36"/>
        <end position="50"/>
    </location>
</feature>
<name>MYL6B_MOUSE</name>
<organism>
    <name type="scientific">Mus musculus</name>
    <name type="common">Mouse</name>
    <dbReference type="NCBI Taxonomy" id="10090"/>
    <lineage>
        <taxon>Eukaryota</taxon>
        <taxon>Metazoa</taxon>
        <taxon>Chordata</taxon>
        <taxon>Craniata</taxon>
        <taxon>Vertebrata</taxon>
        <taxon>Euteleostomi</taxon>
        <taxon>Mammalia</taxon>
        <taxon>Eutheria</taxon>
        <taxon>Euarchontoglires</taxon>
        <taxon>Glires</taxon>
        <taxon>Rodentia</taxon>
        <taxon>Myomorpha</taxon>
        <taxon>Muroidea</taxon>
        <taxon>Muridae</taxon>
        <taxon>Murinae</taxon>
        <taxon>Mus</taxon>
        <taxon>Mus</taxon>
    </lineage>
</organism>
<reference evidence="4" key="1">
    <citation type="journal article" date="2004" name="Genome Res.">
        <title>The status, quality, and expansion of the NIH full-length cDNA project: the Mammalian Gene Collection (MGC).</title>
        <authorList>
            <consortium name="The MGC Project Team"/>
        </authorList>
    </citation>
    <scope>NUCLEOTIDE SEQUENCE [LARGE SCALE MRNA]</scope>
    <source>
        <tissue evidence="4">Mammary gland</tissue>
    </source>
</reference>
<reference key="2">
    <citation type="journal article" date="2010" name="Cell">
        <title>A tissue-specific atlas of mouse protein phosphorylation and expression.</title>
        <authorList>
            <person name="Huttlin E.L."/>
            <person name="Jedrychowski M.P."/>
            <person name="Elias J.E."/>
            <person name="Goswami T."/>
            <person name="Rad R."/>
            <person name="Beausoleil S.A."/>
            <person name="Villen J."/>
            <person name="Haas W."/>
            <person name="Sowa M.E."/>
            <person name="Gygi S.P."/>
        </authorList>
    </citation>
    <scope>IDENTIFICATION BY MASS SPECTROMETRY [LARGE SCALE ANALYSIS]</scope>
    <source>
        <tissue>Testis</tissue>
    </source>
</reference>
<sequence length="207" mass="22749">MPPKKDAPVKKPAGPSISKPAAKSTPGTPLAKAKAEPAAPQAPAKSQEPPVDLSKVVIEFNKDQLEEFREAFELFDRVGDGKILYSQCGDLMRALGQNPTNAEVLKVLGNPKNEELKSRRVDFETFLPMLQAVAKNRDQGTYEDYLEGLRVFDKEGNGKVMGAELRHVLTTLGEKMTEEEVETVLAGHEDSNGCINYEAFLKHILSL</sequence>
<evidence type="ECO:0000255" key="1">
    <source>
        <dbReference type="PROSITE-ProRule" id="PRU00448"/>
    </source>
</evidence>
<evidence type="ECO:0000256" key="2">
    <source>
        <dbReference type="SAM" id="MobiDB-lite"/>
    </source>
</evidence>
<evidence type="ECO:0000305" key="3"/>
<evidence type="ECO:0000312" key="4">
    <source>
        <dbReference type="EMBL" id="AAH37527.1"/>
    </source>
</evidence>
<evidence type="ECO:0000312" key="5">
    <source>
        <dbReference type="MGI" id="MGI:1917789"/>
    </source>
</evidence>
<proteinExistence type="evidence at protein level"/>
<comment type="function">
    <text evidence="3">Regulatory light chain of myosin. Does not bind calcium.</text>
</comment>
<comment type="subunit">
    <text>Myosin is a hexamer of 2 heavy chains and 4 light chains.</text>
</comment>
<dbReference type="EMBL" id="BC037527">
    <property type="protein sequence ID" value="AAH37527.1"/>
    <property type="molecule type" value="mRNA"/>
</dbReference>
<dbReference type="CCDS" id="CCDS24279.1"/>
<dbReference type="RefSeq" id="NP_758463.1">
    <property type="nucleotide sequence ID" value="NM_172259.1"/>
</dbReference>
<dbReference type="RefSeq" id="XP_017169402.1">
    <property type="nucleotide sequence ID" value="XM_017313913.1"/>
</dbReference>
<dbReference type="RefSeq" id="XP_017169403.1">
    <property type="nucleotide sequence ID" value="XM_017313914.1"/>
</dbReference>
<dbReference type="RefSeq" id="XP_017169404.1">
    <property type="nucleotide sequence ID" value="XM_017313915.1"/>
</dbReference>
<dbReference type="RefSeq" id="XP_017169405.1">
    <property type="nucleotide sequence ID" value="XM_017313916.1"/>
</dbReference>
<dbReference type="RefSeq" id="XP_017169406.1">
    <property type="nucleotide sequence ID" value="XM_017313917.1"/>
</dbReference>
<dbReference type="SMR" id="Q8CI43"/>
<dbReference type="BioGRID" id="229752">
    <property type="interactions" value="9"/>
</dbReference>
<dbReference type="FunCoup" id="Q8CI43">
    <property type="interactions" value="274"/>
</dbReference>
<dbReference type="IntAct" id="Q8CI43">
    <property type="interactions" value="4"/>
</dbReference>
<dbReference type="MINT" id="Q8CI43"/>
<dbReference type="STRING" id="10090.ENSMUSP00000026428"/>
<dbReference type="iPTMnet" id="Q8CI43"/>
<dbReference type="PhosphoSitePlus" id="Q8CI43"/>
<dbReference type="SwissPalm" id="Q8CI43"/>
<dbReference type="jPOST" id="Q8CI43"/>
<dbReference type="PaxDb" id="10090-ENSMUSP00000026428"/>
<dbReference type="PeptideAtlas" id="Q8CI43"/>
<dbReference type="ProteomicsDB" id="286120"/>
<dbReference type="Pumba" id="Q8CI43"/>
<dbReference type="Antibodypedia" id="27985">
    <property type="antibodies" value="192 antibodies from 26 providers"/>
</dbReference>
<dbReference type="DNASU" id="216459"/>
<dbReference type="Ensembl" id="ENSMUST00000026428.4">
    <property type="protein sequence ID" value="ENSMUSP00000026428.4"/>
    <property type="gene ID" value="ENSMUSG00000039824.5"/>
</dbReference>
<dbReference type="GeneID" id="216459"/>
<dbReference type="KEGG" id="mmu:216459"/>
<dbReference type="UCSC" id="uc007hne.1">
    <property type="organism name" value="mouse"/>
</dbReference>
<dbReference type="AGR" id="MGI:1917789"/>
<dbReference type="CTD" id="140465"/>
<dbReference type="MGI" id="MGI:1917789">
    <property type="gene designation" value="Myl6b"/>
</dbReference>
<dbReference type="VEuPathDB" id="HostDB:ENSMUSG00000039824"/>
<dbReference type="eggNOG" id="KOG0030">
    <property type="taxonomic scope" value="Eukaryota"/>
</dbReference>
<dbReference type="GeneTree" id="ENSGT01030000234570"/>
<dbReference type="HOGENOM" id="CLU_061288_13_0_1"/>
<dbReference type="InParanoid" id="Q8CI43"/>
<dbReference type="OMA" id="NRDRGTY"/>
<dbReference type="OrthoDB" id="5959761at2759"/>
<dbReference type="PhylomeDB" id="Q8CI43"/>
<dbReference type="TreeFam" id="TF351553"/>
<dbReference type="Reactome" id="R-MMU-445355">
    <property type="pathway name" value="Smooth Muscle Contraction"/>
</dbReference>
<dbReference type="BioGRID-ORCS" id="216459">
    <property type="hits" value="5 hits in 77 CRISPR screens"/>
</dbReference>
<dbReference type="CD-CODE" id="CE726F99">
    <property type="entry name" value="Postsynaptic density"/>
</dbReference>
<dbReference type="ChiTaRS" id="Myl6b">
    <property type="organism name" value="mouse"/>
</dbReference>
<dbReference type="PRO" id="PR:Q8CI43"/>
<dbReference type="Proteomes" id="UP000000589">
    <property type="component" value="Chromosome 10"/>
</dbReference>
<dbReference type="RNAct" id="Q8CI43">
    <property type="molecule type" value="protein"/>
</dbReference>
<dbReference type="Bgee" id="ENSMUSG00000039824">
    <property type="expression patterns" value="Expressed in cortical plate and 75 other cell types or tissues"/>
</dbReference>
<dbReference type="GO" id="GO:0016459">
    <property type="term" value="C:myosin complex"/>
    <property type="evidence" value="ECO:0000304"/>
    <property type="project" value="HGNC-UCL"/>
</dbReference>
<dbReference type="GO" id="GO:0016461">
    <property type="term" value="C:unconventional myosin complex"/>
    <property type="evidence" value="ECO:0000304"/>
    <property type="project" value="UniProtKB"/>
</dbReference>
<dbReference type="GO" id="GO:0005509">
    <property type="term" value="F:calcium ion binding"/>
    <property type="evidence" value="ECO:0007669"/>
    <property type="project" value="InterPro"/>
</dbReference>
<dbReference type="GO" id="GO:0003774">
    <property type="term" value="F:cytoskeletal motor activity"/>
    <property type="evidence" value="ECO:0000304"/>
    <property type="project" value="HGNC-UCL"/>
</dbReference>
<dbReference type="GO" id="GO:0008307">
    <property type="term" value="F:structural constituent of muscle"/>
    <property type="evidence" value="ECO:0000304"/>
    <property type="project" value="HGNC-UCL"/>
</dbReference>
<dbReference type="GO" id="GO:0006936">
    <property type="term" value="P:muscle contraction"/>
    <property type="evidence" value="ECO:0000304"/>
    <property type="project" value="HGNC-UCL"/>
</dbReference>
<dbReference type="GO" id="GO:0030049">
    <property type="term" value="P:muscle filament sliding"/>
    <property type="evidence" value="ECO:0000304"/>
    <property type="project" value="HGNC-UCL"/>
</dbReference>
<dbReference type="GO" id="GO:0007519">
    <property type="term" value="P:skeletal muscle tissue development"/>
    <property type="evidence" value="ECO:0000304"/>
    <property type="project" value="HGNC-UCL"/>
</dbReference>
<dbReference type="CDD" id="cd00051">
    <property type="entry name" value="EFh"/>
    <property type="match status" value="1"/>
</dbReference>
<dbReference type="FunFam" id="1.10.238.10:FF:000019">
    <property type="entry name" value="Myosin light chain 1 skeletal"/>
    <property type="match status" value="1"/>
</dbReference>
<dbReference type="FunFam" id="1.10.238.10:FF:000056">
    <property type="entry name" value="Myosin light chain 1 skeletal"/>
    <property type="match status" value="1"/>
</dbReference>
<dbReference type="Gene3D" id="1.10.238.10">
    <property type="entry name" value="EF-hand"/>
    <property type="match status" value="2"/>
</dbReference>
<dbReference type="InterPro" id="IPR050230">
    <property type="entry name" value="CALM/Myosin/TropC-like"/>
</dbReference>
<dbReference type="InterPro" id="IPR011992">
    <property type="entry name" value="EF-hand-dom_pair"/>
</dbReference>
<dbReference type="InterPro" id="IPR002048">
    <property type="entry name" value="EF_hand_dom"/>
</dbReference>
<dbReference type="PANTHER" id="PTHR23048">
    <property type="entry name" value="MYOSIN LIGHT CHAIN 1, 3"/>
    <property type="match status" value="1"/>
</dbReference>
<dbReference type="PANTHER" id="PTHR23048:SF5">
    <property type="entry name" value="MYOSIN LIGHT CHAIN 6B"/>
    <property type="match status" value="1"/>
</dbReference>
<dbReference type="SMART" id="SM00054">
    <property type="entry name" value="EFh"/>
    <property type="match status" value="2"/>
</dbReference>
<dbReference type="SUPFAM" id="SSF47473">
    <property type="entry name" value="EF-hand"/>
    <property type="match status" value="1"/>
</dbReference>
<dbReference type="PROSITE" id="PS50222">
    <property type="entry name" value="EF_HAND_2"/>
    <property type="match status" value="3"/>
</dbReference>
<protein>
    <recommendedName>
        <fullName>Myosin light chain 6B</fullName>
    </recommendedName>
    <alternativeName>
        <fullName>Smooth muscle and nonmuscle myosin light chain alkali 6B</fullName>
    </alternativeName>
</protein>
<keyword id="KW-0505">Motor protein</keyword>
<keyword id="KW-0514">Muscle protein</keyword>
<keyword id="KW-0518">Myosin</keyword>
<keyword id="KW-1185">Reference proteome</keyword>
<keyword id="KW-0677">Repeat</keyword>
<gene>
    <name evidence="4 5" type="primary">Myl6b</name>
</gene>